<organism>
    <name type="scientific">Colwellia psychrerythraea (strain 34H / ATCC BAA-681)</name>
    <name type="common">Vibrio psychroerythus</name>
    <dbReference type="NCBI Taxonomy" id="167879"/>
    <lineage>
        <taxon>Bacteria</taxon>
        <taxon>Pseudomonadati</taxon>
        <taxon>Pseudomonadota</taxon>
        <taxon>Gammaproteobacteria</taxon>
        <taxon>Alteromonadales</taxon>
        <taxon>Colwelliaceae</taxon>
        <taxon>Colwellia</taxon>
    </lineage>
</organism>
<keyword id="KW-0067">ATP-binding</keyword>
<keyword id="KW-0963">Cytoplasm</keyword>
<keyword id="KW-0324">Glycolysis</keyword>
<keyword id="KW-0418">Kinase</keyword>
<keyword id="KW-0547">Nucleotide-binding</keyword>
<keyword id="KW-0808">Transferase</keyword>
<sequence length="330" mass="36201">MKNSQDTQVINLVADIGGTNIRLAITDKDNNINEIKTYQCKDFPHLSNVIYHYLKENGLLNSQVNACLAIACPVDTDSISMTNLPWKFSQKQLKEELKLHSLTLINDYTAIAMAIPLLSDKQKVKIGHGEAENKQPIAVCGPGTGLGVANLVNINNHWYCLGGEGGHTDFAPVDELDVKIFQQLKTTKKRLSYEQLLSGYGLEQIYQALVIINNQEATNAEQSKLSAKEISTQAIAGTCPICQQALSQFCKILGSFSGNLALTTGSFGGVYIAGGIVPRFIDYLKNSEFRARFETKGRMSHLNEQIPTYIITESQPGLLGAAAYLNQVFP</sequence>
<evidence type="ECO:0000255" key="1">
    <source>
        <dbReference type="HAMAP-Rule" id="MF_00524"/>
    </source>
</evidence>
<proteinExistence type="inferred from homology"/>
<dbReference type="EC" id="2.7.1.2" evidence="1"/>
<dbReference type="EMBL" id="CP000083">
    <property type="protein sequence ID" value="AAZ28073.1"/>
    <property type="molecule type" value="Genomic_DNA"/>
</dbReference>
<dbReference type="RefSeq" id="WP_011044463.1">
    <property type="nucleotide sequence ID" value="NC_003910.7"/>
</dbReference>
<dbReference type="SMR" id="Q47XU3"/>
<dbReference type="STRING" id="167879.CPS_3710"/>
<dbReference type="KEGG" id="cps:CPS_3710"/>
<dbReference type="HOGENOM" id="CLU_042582_1_0_6"/>
<dbReference type="Proteomes" id="UP000000547">
    <property type="component" value="Chromosome"/>
</dbReference>
<dbReference type="GO" id="GO:0005829">
    <property type="term" value="C:cytosol"/>
    <property type="evidence" value="ECO:0007669"/>
    <property type="project" value="TreeGrafter"/>
</dbReference>
<dbReference type="GO" id="GO:0005524">
    <property type="term" value="F:ATP binding"/>
    <property type="evidence" value="ECO:0007669"/>
    <property type="project" value="UniProtKB-UniRule"/>
</dbReference>
<dbReference type="GO" id="GO:0005536">
    <property type="term" value="F:D-glucose binding"/>
    <property type="evidence" value="ECO:0007669"/>
    <property type="project" value="InterPro"/>
</dbReference>
<dbReference type="GO" id="GO:0004340">
    <property type="term" value="F:glucokinase activity"/>
    <property type="evidence" value="ECO:0007669"/>
    <property type="project" value="UniProtKB-UniRule"/>
</dbReference>
<dbReference type="GO" id="GO:0006096">
    <property type="term" value="P:glycolytic process"/>
    <property type="evidence" value="ECO:0007669"/>
    <property type="project" value="UniProtKB-UniRule"/>
</dbReference>
<dbReference type="CDD" id="cd24008">
    <property type="entry name" value="ASKHA_NBD_GLK"/>
    <property type="match status" value="1"/>
</dbReference>
<dbReference type="Gene3D" id="3.30.420.40">
    <property type="match status" value="1"/>
</dbReference>
<dbReference type="Gene3D" id="3.40.367.20">
    <property type="match status" value="1"/>
</dbReference>
<dbReference type="HAMAP" id="MF_00524">
    <property type="entry name" value="Glucokinase"/>
    <property type="match status" value="1"/>
</dbReference>
<dbReference type="InterPro" id="IPR043129">
    <property type="entry name" value="ATPase_NBD"/>
</dbReference>
<dbReference type="InterPro" id="IPR050201">
    <property type="entry name" value="Bacterial_glucokinase"/>
</dbReference>
<dbReference type="InterPro" id="IPR003836">
    <property type="entry name" value="Glucokinase"/>
</dbReference>
<dbReference type="NCBIfam" id="TIGR00749">
    <property type="entry name" value="glk"/>
    <property type="match status" value="1"/>
</dbReference>
<dbReference type="NCBIfam" id="NF001416">
    <property type="entry name" value="PRK00292.1-3"/>
    <property type="match status" value="1"/>
</dbReference>
<dbReference type="NCBIfam" id="NF009073">
    <property type="entry name" value="PRK12408.1"/>
    <property type="match status" value="1"/>
</dbReference>
<dbReference type="PANTHER" id="PTHR47690">
    <property type="entry name" value="GLUCOKINASE"/>
    <property type="match status" value="1"/>
</dbReference>
<dbReference type="PANTHER" id="PTHR47690:SF1">
    <property type="entry name" value="GLUCOKINASE"/>
    <property type="match status" value="1"/>
</dbReference>
<dbReference type="Pfam" id="PF02685">
    <property type="entry name" value="Glucokinase"/>
    <property type="match status" value="1"/>
</dbReference>
<dbReference type="SUPFAM" id="SSF53067">
    <property type="entry name" value="Actin-like ATPase domain"/>
    <property type="match status" value="1"/>
</dbReference>
<protein>
    <recommendedName>
        <fullName evidence="1">Glucokinase</fullName>
        <ecNumber evidence="1">2.7.1.2</ecNumber>
    </recommendedName>
    <alternativeName>
        <fullName evidence="1">Glucose kinase</fullName>
    </alternativeName>
</protein>
<accession>Q47XU3</accession>
<feature type="chain" id="PRO_0000268771" description="Glucokinase">
    <location>
        <begin position="1"/>
        <end position="330"/>
    </location>
</feature>
<feature type="binding site" evidence="1">
    <location>
        <begin position="14"/>
        <end position="19"/>
    </location>
    <ligand>
        <name>ATP</name>
        <dbReference type="ChEBI" id="CHEBI:30616"/>
    </ligand>
</feature>
<reference key="1">
    <citation type="journal article" date="2005" name="Proc. Natl. Acad. Sci. U.S.A.">
        <title>The psychrophilic lifestyle as revealed by the genome sequence of Colwellia psychrerythraea 34H through genomic and proteomic analyses.</title>
        <authorList>
            <person name="Methe B.A."/>
            <person name="Nelson K.E."/>
            <person name="Deming J.W."/>
            <person name="Momen B."/>
            <person name="Melamud E."/>
            <person name="Zhang X."/>
            <person name="Moult J."/>
            <person name="Madupu R."/>
            <person name="Nelson W.C."/>
            <person name="Dodson R.J."/>
            <person name="Brinkac L.M."/>
            <person name="Daugherty S.C."/>
            <person name="Durkin A.S."/>
            <person name="DeBoy R.T."/>
            <person name="Kolonay J.F."/>
            <person name="Sullivan S.A."/>
            <person name="Zhou L."/>
            <person name="Davidsen T.M."/>
            <person name="Wu M."/>
            <person name="Huston A.L."/>
            <person name="Lewis M."/>
            <person name="Weaver B."/>
            <person name="Weidman J.F."/>
            <person name="Khouri H."/>
            <person name="Utterback T.R."/>
            <person name="Feldblyum T.V."/>
            <person name="Fraser C.M."/>
        </authorList>
    </citation>
    <scope>NUCLEOTIDE SEQUENCE [LARGE SCALE GENOMIC DNA]</scope>
    <source>
        <strain>34H / ATCC BAA-681</strain>
    </source>
</reference>
<name>GLK_COLP3</name>
<comment type="catalytic activity">
    <reaction evidence="1">
        <text>D-glucose + ATP = D-glucose 6-phosphate + ADP + H(+)</text>
        <dbReference type="Rhea" id="RHEA:17825"/>
        <dbReference type="ChEBI" id="CHEBI:4167"/>
        <dbReference type="ChEBI" id="CHEBI:15378"/>
        <dbReference type="ChEBI" id="CHEBI:30616"/>
        <dbReference type="ChEBI" id="CHEBI:61548"/>
        <dbReference type="ChEBI" id="CHEBI:456216"/>
        <dbReference type="EC" id="2.7.1.2"/>
    </reaction>
</comment>
<comment type="subcellular location">
    <subcellularLocation>
        <location evidence="1">Cytoplasm</location>
    </subcellularLocation>
</comment>
<comment type="similarity">
    <text evidence="1">Belongs to the bacterial glucokinase family.</text>
</comment>
<gene>
    <name evidence="1" type="primary">glk</name>
    <name type="ordered locus">CPS_3710</name>
</gene>